<dbReference type="EC" id="2.7.11.11" evidence="11"/>
<dbReference type="EMBL" id="M37119">
    <property type="protein sequence ID" value="AAA51610.1"/>
    <property type="molecule type" value="Genomic_DNA"/>
</dbReference>
<dbReference type="EMBL" id="M37114">
    <property type="protein sequence ID" value="AAA51610.1"/>
    <property type="status" value="JOINED"/>
    <property type="molecule type" value="Genomic_DNA"/>
</dbReference>
<dbReference type="EMBL" id="M37115">
    <property type="protein sequence ID" value="AAA51610.1"/>
    <property type="status" value="JOINED"/>
    <property type="molecule type" value="Genomic_DNA"/>
</dbReference>
<dbReference type="EMBL" id="M37116">
    <property type="protein sequence ID" value="AAA51610.1"/>
    <property type="status" value="JOINED"/>
    <property type="molecule type" value="Genomic_DNA"/>
</dbReference>
<dbReference type="EMBL" id="M37117">
    <property type="protein sequence ID" value="AAA51610.1"/>
    <property type="status" value="JOINED"/>
    <property type="molecule type" value="Genomic_DNA"/>
</dbReference>
<dbReference type="EMBL" id="M37118">
    <property type="protein sequence ID" value="AAA51610.1"/>
    <property type="status" value="JOINED"/>
    <property type="molecule type" value="Genomic_DNA"/>
</dbReference>
<dbReference type="EMBL" id="Z82096">
    <property type="protein sequence ID" value="CAD45613.1"/>
    <property type="molecule type" value="Genomic_DNA"/>
</dbReference>
<dbReference type="EMBL" id="Z82096">
    <property type="protein sequence ID" value="CAD45614.1"/>
    <property type="molecule type" value="Genomic_DNA"/>
</dbReference>
<dbReference type="EMBL" id="Z82096">
    <property type="protein sequence ID" value="CAD45615.1"/>
    <property type="molecule type" value="Genomic_DNA"/>
</dbReference>
<dbReference type="EMBL" id="Z82096">
    <property type="protein sequence ID" value="CAD45616.1"/>
    <property type="molecule type" value="Genomic_DNA"/>
</dbReference>
<dbReference type="EMBL" id="Z81511">
    <property type="protein sequence ID" value="CAD45616.1"/>
    <property type="status" value="JOINED"/>
    <property type="molecule type" value="Genomic_DNA"/>
</dbReference>
<dbReference type="EMBL" id="Z82096">
    <property type="protein sequence ID" value="CAD45617.1"/>
    <property type="molecule type" value="Genomic_DNA"/>
</dbReference>
<dbReference type="EMBL" id="Z81511">
    <property type="protein sequence ID" value="CAD45617.1"/>
    <property type="status" value="JOINED"/>
    <property type="molecule type" value="Genomic_DNA"/>
</dbReference>
<dbReference type="EMBL" id="Z82096">
    <property type="protein sequence ID" value="CAD45618.1"/>
    <property type="molecule type" value="Genomic_DNA"/>
</dbReference>
<dbReference type="EMBL" id="Z81511">
    <property type="protein sequence ID" value="CAD45618.1"/>
    <property type="status" value="JOINED"/>
    <property type="molecule type" value="Genomic_DNA"/>
</dbReference>
<dbReference type="EMBL" id="Z82096">
    <property type="protein sequence ID" value="CAD45619.1"/>
    <property type="molecule type" value="Genomic_DNA"/>
</dbReference>
<dbReference type="EMBL" id="Z81511">
    <property type="protein sequence ID" value="CAD45619.1"/>
    <property type="status" value="JOINED"/>
    <property type="molecule type" value="Genomic_DNA"/>
</dbReference>
<dbReference type="EMBL" id="Z82096">
    <property type="protein sequence ID" value="CAD45620.1"/>
    <property type="molecule type" value="Genomic_DNA"/>
</dbReference>
<dbReference type="EMBL" id="Z81511">
    <property type="protein sequence ID" value="CAD45620.1"/>
    <property type="status" value="JOINED"/>
    <property type="molecule type" value="Genomic_DNA"/>
</dbReference>
<dbReference type="EMBL" id="Z82096">
    <property type="protein sequence ID" value="CAD45621.1"/>
    <property type="molecule type" value="Genomic_DNA"/>
</dbReference>
<dbReference type="EMBL" id="Z81511">
    <property type="protein sequence ID" value="CAD45621.1"/>
    <property type="status" value="JOINED"/>
    <property type="molecule type" value="Genomic_DNA"/>
</dbReference>
<dbReference type="EMBL" id="Z82096">
    <property type="protein sequence ID" value="CAD45622.1"/>
    <property type="molecule type" value="Genomic_DNA"/>
</dbReference>
<dbReference type="EMBL" id="Z81511">
    <property type="protein sequence ID" value="CAD45622.1"/>
    <property type="status" value="JOINED"/>
    <property type="molecule type" value="Genomic_DNA"/>
</dbReference>
<dbReference type="EMBL" id="Z82096">
    <property type="protein sequence ID" value="CAD45623.1"/>
    <property type="molecule type" value="Genomic_DNA"/>
</dbReference>
<dbReference type="EMBL" id="Z81511">
    <property type="protein sequence ID" value="CAD45623.1"/>
    <property type="status" value="JOINED"/>
    <property type="molecule type" value="Genomic_DNA"/>
</dbReference>
<dbReference type="EMBL" id="Z82096">
    <property type="protein sequence ID" value="CAB05034.1"/>
    <property type="molecule type" value="Genomic_DNA"/>
</dbReference>
<dbReference type="EMBL" id="Z81511">
    <property type="protein sequence ID" value="CAB05034.1"/>
    <property type="status" value="JOINED"/>
    <property type="molecule type" value="Genomic_DNA"/>
</dbReference>
<dbReference type="EMBL" id="Z82096">
    <property type="protein sequence ID" value="CAB05035.1"/>
    <property type="molecule type" value="Genomic_DNA"/>
</dbReference>
<dbReference type="EMBL" id="Z81511">
    <property type="protein sequence ID" value="CAB05035.1"/>
    <property type="status" value="JOINED"/>
    <property type="molecule type" value="Genomic_DNA"/>
</dbReference>
<dbReference type="EMBL" id="AJ011936">
    <property type="protein sequence ID" value="CAB41353.1"/>
    <property type="molecule type" value="mRNA"/>
</dbReference>
<dbReference type="EMBL" id="AJ011937">
    <property type="protein sequence ID" value="CAB41354.1"/>
    <property type="molecule type" value="mRNA"/>
</dbReference>
<dbReference type="EMBL" id="AJ011938">
    <property type="protein sequence ID" value="CAB41355.1"/>
    <property type="molecule type" value="mRNA"/>
</dbReference>
<dbReference type="EMBL" id="AJ012354">
    <property type="protein sequence ID" value="CAB41349.1"/>
    <property type="molecule type" value="mRNA"/>
</dbReference>
<dbReference type="EMBL" id="AJ012355">
    <property type="protein sequence ID" value="CAB41350.1"/>
    <property type="molecule type" value="mRNA"/>
</dbReference>
<dbReference type="EMBL" id="AJ012356">
    <property type="protein sequence ID" value="CAB41351.1"/>
    <property type="molecule type" value="mRNA"/>
</dbReference>
<dbReference type="PIR" id="A35755">
    <property type="entry name" value="OKKWC1"/>
</dbReference>
<dbReference type="PIR" id="B35755">
    <property type="entry name" value="OKKWC2"/>
</dbReference>
<dbReference type="PIR" id="T21211">
    <property type="entry name" value="T21211"/>
</dbReference>
<dbReference type="PIR" id="T21212">
    <property type="entry name" value="T21212"/>
</dbReference>
<dbReference type="RefSeq" id="NP_001366905.1">
    <molecule id="P21137-3"/>
    <property type="nucleotide sequence ID" value="NM_001381272.1"/>
</dbReference>
<dbReference type="RefSeq" id="NP_001367021.1">
    <molecule id="P21137-4"/>
    <property type="nucleotide sequence ID" value="NM_001381275.2"/>
</dbReference>
<dbReference type="RefSeq" id="NP_001367022.1">
    <molecule id="P21137-5"/>
    <property type="nucleotide sequence ID" value="NM_001381274.1"/>
</dbReference>
<dbReference type="RefSeq" id="NP_001367023.1">
    <molecule id="P21137-9"/>
    <property type="nucleotide sequence ID" value="NM_001381271.1"/>
</dbReference>
<dbReference type="RefSeq" id="NP_001367024.1">
    <molecule id="P21137-10"/>
    <property type="nucleotide sequence ID" value="NM_001381270.1"/>
</dbReference>
<dbReference type="RefSeq" id="NP_001367025.1">
    <molecule id="P21137-11"/>
    <property type="nucleotide sequence ID" value="NM_001381273.1"/>
</dbReference>
<dbReference type="RefSeq" id="NP_493605.1">
    <molecule id="P21137-2"/>
    <property type="nucleotide sequence ID" value="NM_061204.4"/>
</dbReference>
<dbReference type="RefSeq" id="NP_493606.1">
    <property type="nucleotide sequence ID" value="NM_061205.3"/>
</dbReference>
<dbReference type="RefSeq" id="NP_740954.1">
    <molecule id="P21137-8"/>
    <property type="nucleotide sequence ID" value="NM_170958.6"/>
</dbReference>
<dbReference type="RefSeq" id="NP_740955.1">
    <property type="nucleotide sequence ID" value="NM_170959.4"/>
</dbReference>
<dbReference type="RefSeq" id="NP_740956.1">
    <molecule id="P21137-7"/>
    <property type="nucleotide sequence ID" value="NM_170960.7"/>
</dbReference>
<dbReference type="RefSeq" id="NP_740957.1">
    <property type="nucleotide sequence ID" value="NM_170961.1"/>
</dbReference>
<dbReference type="RefSeq" id="NP_740958.1">
    <molecule id="P21137-6"/>
    <property type="nucleotide sequence ID" value="NM_170962.5"/>
</dbReference>
<dbReference type="RefSeq" id="NP_740959.1">
    <property type="nucleotide sequence ID" value="NM_170963.1"/>
</dbReference>
<dbReference type="RefSeq" id="NP_740960.1">
    <molecule id="P21137-12"/>
    <property type="nucleotide sequence ID" value="NM_170964.6"/>
</dbReference>
<dbReference type="RefSeq" id="NP_740961.1">
    <molecule id="P21137-1"/>
    <property type="nucleotide sequence ID" value="NM_170965.3"/>
</dbReference>
<dbReference type="RefSeq" id="NP_740962.1">
    <molecule id="P21137-13"/>
    <property type="nucleotide sequence ID" value="NM_170966.3"/>
</dbReference>
<dbReference type="RefSeq" id="NP_740963.1">
    <property type="nucleotide sequence ID" value="NM_170967.3"/>
</dbReference>
<dbReference type="RefSeq" id="NP_740964.1">
    <property type="nucleotide sequence ID" value="NM_170968.3"/>
</dbReference>
<dbReference type="SMR" id="P21137"/>
<dbReference type="BioGRID" id="532725">
    <property type="interactions" value="18"/>
</dbReference>
<dbReference type="DIP" id="DIP-26547N"/>
<dbReference type="FunCoup" id="P21137">
    <property type="interactions" value="2000"/>
</dbReference>
<dbReference type="STRING" id="6239.ZK909.2n.2"/>
<dbReference type="iPTMnet" id="P21137"/>
<dbReference type="PaxDb" id="6239-ZK909.2c"/>
<dbReference type="PeptideAtlas" id="P21137"/>
<dbReference type="EnsemblMetazoa" id="ZK909.2a.1">
    <molecule id="P21137-2"/>
    <property type="protein sequence ID" value="ZK909.2a.1"/>
    <property type="gene ID" value="WBGene00002189"/>
</dbReference>
<dbReference type="EnsemblMetazoa" id="ZK909.2b.1">
    <molecule id="P21137-3"/>
    <property type="protein sequence ID" value="ZK909.2b.1"/>
    <property type="gene ID" value="WBGene00002189"/>
</dbReference>
<dbReference type="EnsemblMetazoa" id="ZK909.2b.2">
    <molecule id="P21137-3"/>
    <property type="protein sequence ID" value="ZK909.2b.2"/>
    <property type="gene ID" value="WBGene00002189"/>
</dbReference>
<dbReference type="EnsemblMetazoa" id="ZK909.2c.1">
    <molecule id="P21137-4"/>
    <property type="protein sequence ID" value="ZK909.2c.1"/>
    <property type="gene ID" value="WBGene00002189"/>
</dbReference>
<dbReference type="EnsemblMetazoa" id="ZK909.2d.1">
    <molecule id="P21137-5"/>
    <property type="protein sequence ID" value="ZK909.2d.1"/>
    <property type="gene ID" value="WBGene00002189"/>
</dbReference>
<dbReference type="EnsemblMetazoa" id="ZK909.2e.1">
    <molecule id="P21137-1"/>
    <property type="protein sequence ID" value="ZK909.2e.1"/>
    <property type="gene ID" value="WBGene00002189"/>
</dbReference>
<dbReference type="EnsemblMetazoa" id="ZK909.2f.1">
    <molecule id="P21137-6"/>
    <property type="protein sequence ID" value="ZK909.2f.1"/>
    <property type="gene ID" value="WBGene00002189"/>
</dbReference>
<dbReference type="EnsemblMetazoa" id="ZK909.2g.1">
    <molecule id="P21137-7"/>
    <property type="protein sequence ID" value="ZK909.2g.1"/>
    <property type="gene ID" value="WBGene00002189"/>
</dbReference>
<dbReference type="EnsemblMetazoa" id="ZK909.2h.1">
    <molecule id="P21137-8"/>
    <property type="protein sequence ID" value="ZK909.2h.1"/>
    <property type="gene ID" value="WBGene00002189"/>
</dbReference>
<dbReference type="EnsemblMetazoa" id="ZK909.2i.1">
    <molecule id="P21137-9"/>
    <property type="protein sequence ID" value="ZK909.2i.1"/>
    <property type="gene ID" value="WBGene00002189"/>
</dbReference>
<dbReference type="EnsemblMetazoa" id="ZK909.2j.1">
    <molecule id="P21137-10"/>
    <property type="protein sequence ID" value="ZK909.2j.1"/>
    <property type="gene ID" value="WBGene00002189"/>
</dbReference>
<dbReference type="EnsemblMetazoa" id="ZK909.2k.1">
    <molecule id="P21137-11"/>
    <property type="protein sequence ID" value="ZK909.2k.1"/>
    <property type="gene ID" value="WBGene00002189"/>
</dbReference>
<dbReference type="EnsemblMetazoa" id="ZK909.2l.1">
    <molecule id="P21137-12"/>
    <property type="protein sequence ID" value="ZK909.2l.1"/>
    <property type="gene ID" value="WBGene00002189"/>
</dbReference>
<dbReference type="EnsemblMetazoa" id="ZK909.2m.1">
    <molecule id="P21137-13"/>
    <property type="protein sequence ID" value="ZK909.2m.1"/>
    <property type="gene ID" value="WBGene00002189"/>
</dbReference>
<dbReference type="GeneID" id="3565407"/>
<dbReference type="KEGG" id="cel:CELE_ZK909.2"/>
<dbReference type="UCSC" id="ZK909.2h.1">
    <property type="organism name" value="c. elegans"/>
</dbReference>
<dbReference type="AGR" id="WB:WBGene00002189"/>
<dbReference type="CTD" id="3565407"/>
<dbReference type="WormBase" id="ZK909.2a">
    <molecule id="P21137-2"/>
    <property type="protein sequence ID" value="CE15473"/>
    <property type="gene ID" value="WBGene00002189"/>
    <property type="gene designation" value="kin-1"/>
</dbReference>
<dbReference type="WormBase" id="ZK909.2b">
    <molecule id="P21137-3"/>
    <property type="protein sequence ID" value="CE15475"/>
    <property type="gene ID" value="WBGene00002189"/>
    <property type="gene designation" value="kin-1"/>
</dbReference>
<dbReference type="WormBase" id="ZK909.2c">
    <molecule id="P21137-4"/>
    <property type="protein sequence ID" value="CE31755"/>
    <property type="gene ID" value="WBGene00002189"/>
    <property type="gene designation" value="kin-1"/>
</dbReference>
<dbReference type="WormBase" id="ZK909.2d">
    <molecule id="P21137-5"/>
    <property type="protein sequence ID" value="CE31756"/>
    <property type="gene ID" value="WBGene00002189"/>
    <property type="gene designation" value="kin-1"/>
</dbReference>
<dbReference type="WormBase" id="ZK909.2e">
    <molecule id="P21137-1"/>
    <property type="protein sequence ID" value="CE31757"/>
    <property type="gene ID" value="WBGene00002189"/>
    <property type="gene designation" value="kin-1"/>
</dbReference>
<dbReference type="WormBase" id="ZK909.2f">
    <molecule id="P21137-6"/>
    <property type="protein sequence ID" value="CE31758"/>
    <property type="gene ID" value="WBGene00002189"/>
    <property type="gene designation" value="kin-1"/>
</dbReference>
<dbReference type="WormBase" id="ZK909.2g">
    <molecule id="P21137-7"/>
    <property type="protein sequence ID" value="CE31759"/>
    <property type="gene ID" value="WBGene00002189"/>
    <property type="gene designation" value="kin-1"/>
</dbReference>
<dbReference type="WormBase" id="ZK909.2h">
    <molecule id="P21137-8"/>
    <property type="protein sequence ID" value="CE31760"/>
    <property type="gene ID" value="WBGene00002189"/>
    <property type="gene designation" value="kin-1"/>
</dbReference>
<dbReference type="WormBase" id="ZK909.2i">
    <molecule id="P21137-9"/>
    <property type="protein sequence ID" value="CE31761"/>
    <property type="gene ID" value="WBGene00002189"/>
    <property type="gene designation" value="kin-1"/>
</dbReference>
<dbReference type="WormBase" id="ZK909.2j">
    <molecule id="P21137-10"/>
    <property type="protein sequence ID" value="CE31762"/>
    <property type="gene ID" value="WBGene00002189"/>
    <property type="gene designation" value="kin-1"/>
</dbReference>
<dbReference type="WormBase" id="ZK909.2k">
    <molecule id="P21137-11"/>
    <property type="protein sequence ID" value="CE31763"/>
    <property type="gene ID" value="WBGene00002189"/>
    <property type="gene designation" value="kin-1"/>
</dbReference>
<dbReference type="WormBase" id="ZK909.2l">
    <molecule id="P21137-12"/>
    <property type="protein sequence ID" value="CE31764"/>
    <property type="gene ID" value="WBGene00002189"/>
    <property type="gene designation" value="kin-1"/>
</dbReference>
<dbReference type="WormBase" id="ZK909.2m">
    <molecule id="P21137-13"/>
    <property type="protein sequence ID" value="CE31765"/>
    <property type="gene ID" value="WBGene00002189"/>
    <property type="gene designation" value="kin-1"/>
</dbReference>
<dbReference type="eggNOG" id="KOG0616">
    <property type="taxonomic scope" value="Eukaryota"/>
</dbReference>
<dbReference type="GeneTree" id="ENSGT00940000163111"/>
<dbReference type="InParanoid" id="P21137"/>
<dbReference type="OMA" id="NDPFFDW"/>
<dbReference type="OrthoDB" id="63267at2759"/>
<dbReference type="PhylomeDB" id="P21137"/>
<dbReference type="BRENDA" id="2.7.11.11">
    <property type="organism ID" value="1045"/>
</dbReference>
<dbReference type="Reactome" id="R-CEL-163615">
    <property type="pathway name" value="PKA activation"/>
</dbReference>
<dbReference type="Reactome" id="R-CEL-164378">
    <property type="pathway name" value="PKA activation in glucagon signalling"/>
</dbReference>
<dbReference type="Reactome" id="R-CEL-180024">
    <property type="pathway name" value="DARPP-32 events"/>
</dbReference>
<dbReference type="Reactome" id="R-CEL-381676">
    <property type="pathway name" value="Glucagon-like Peptide-1 (GLP1) regulates insulin secretion"/>
</dbReference>
<dbReference type="Reactome" id="R-CEL-392517">
    <property type="pathway name" value="Rap1 signalling"/>
</dbReference>
<dbReference type="Reactome" id="R-CEL-432040">
    <property type="pathway name" value="Vasopressin regulates renal water homeostasis via Aquaporins"/>
</dbReference>
<dbReference type="Reactome" id="R-CEL-4420097">
    <property type="pathway name" value="VEGFA-VEGFR2 Pathway"/>
</dbReference>
<dbReference type="Reactome" id="R-CEL-442720">
    <property type="pathway name" value="CREB1 phosphorylation through the activation of Adenylate Cyclase"/>
</dbReference>
<dbReference type="Reactome" id="R-CEL-5578775">
    <property type="pathway name" value="Ion homeostasis"/>
</dbReference>
<dbReference type="Reactome" id="R-CEL-5610787">
    <property type="pathway name" value="Hedgehog 'off' state"/>
</dbReference>
<dbReference type="Reactome" id="R-CEL-8963896">
    <property type="pathway name" value="HDL assembly"/>
</dbReference>
<dbReference type="Reactome" id="R-CEL-9634597">
    <property type="pathway name" value="GPER1 signaling"/>
</dbReference>
<dbReference type="Reactome" id="R-CEL-983231">
    <property type="pathway name" value="Factors involved in megakaryocyte development and platelet production"/>
</dbReference>
<dbReference type="Reactome" id="R-CEL-9837999">
    <property type="pathway name" value="Mitochondrial protein degradation"/>
</dbReference>
<dbReference type="Reactome" id="R-CEL-9856530">
    <property type="pathway name" value="High laminar flow shear stress activates signaling by PIEZO1 and PECAM1:CDH5:KDR in endothelial cells"/>
</dbReference>
<dbReference type="PRO" id="PR:P21137"/>
<dbReference type="Proteomes" id="UP000001940">
    <property type="component" value="Chromosome I"/>
</dbReference>
<dbReference type="Bgee" id="WBGene00002189">
    <property type="expression patterns" value="Expressed in pharyngeal muscle cell (C elegans) and 3 other cell types or tissues"/>
</dbReference>
<dbReference type="ExpressionAtlas" id="P21137">
    <property type="expression patterns" value="baseline and differential"/>
</dbReference>
<dbReference type="GO" id="GO:0005952">
    <property type="term" value="C:cAMP-dependent protein kinase complex"/>
    <property type="evidence" value="ECO:0000250"/>
    <property type="project" value="WormBase"/>
</dbReference>
<dbReference type="GO" id="GO:0005829">
    <property type="term" value="C:cytosol"/>
    <property type="evidence" value="ECO:0000318"/>
    <property type="project" value="GO_Central"/>
</dbReference>
<dbReference type="GO" id="GO:0005634">
    <property type="term" value="C:nucleus"/>
    <property type="evidence" value="ECO:0000318"/>
    <property type="project" value="GO_Central"/>
</dbReference>
<dbReference type="GO" id="GO:0005524">
    <property type="term" value="F:ATP binding"/>
    <property type="evidence" value="ECO:0007669"/>
    <property type="project" value="UniProtKB-KW"/>
</dbReference>
<dbReference type="GO" id="GO:0004691">
    <property type="term" value="F:cAMP-dependent protein kinase activity"/>
    <property type="evidence" value="ECO:0000314"/>
    <property type="project" value="WormBase"/>
</dbReference>
<dbReference type="GO" id="GO:0106310">
    <property type="term" value="F:protein serine kinase activity"/>
    <property type="evidence" value="ECO:0007669"/>
    <property type="project" value="RHEA"/>
</dbReference>
<dbReference type="GO" id="GO:0004674">
    <property type="term" value="F:protein serine/threonine kinase activity"/>
    <property type="evidence" value="ECO:0000250"/>
    <property type="project" value="WormBase"/>
</dbReference>
<dbReference type="GO" id="GO:1900195">
    <property type="term" value="P:positive regulation of oocyte maturation"/>
    <property type="evidence" value="ECO:0000315"/>
    <property type="project" value="WormBase"/>
</dbReference>
<dbReference type="GO" id="GO:0007165">
    <property type="term" value="P:signal transduction"/>
    <property type="evidence" value="ECO:0000318"/>
    <property type="project" value="GO_Central"/>
</dbReference>
<dbReference type="CDD" id="cd14209">
    <property type="entry name" value="STKc_PKA"/>
    <property type="match status" value="1"/>
</dbReference>
<dbReference type="FunFam" id="3.30.200.20:FF:000005">
    <property type="entry name" value="cAMP-dependent protein kinase catalytic subunit"/>
    <property type="match status" value="1"/>
</dbReference>
<dbReference type="FunFam" id="1.10.510.10:FF:000005">
    <property type="entry name" value="cAMP-dependent protein kinase catalytic subunit alpha"/>
    <property type="match status" value="1"/>
</dbReference>
<dbReference type="Gene3D" id="3.30.200.20">
    <property type="entry name" value="Phosphorylase Kinase, domain 1"/>
    <property type="match status" value="1"/>
</dbReference>
<dbReference type="Gene3D" id="1.10.510.10">
    <property type="entry name" value="Transferase(Phosphotransferase) domain 1"/>
    <property type="match status" value="1"/>
</dbReference>
<dbReference type="InterPro" id="IPR011009">
    <property type="entry name" value="Kinase-like_dom_sf"/>
</dbReference>
<dbReference type="InterPro" id="IPR000719">
    <property type="entry name" value="Prot_kinase_dom"/>
</dbReference>
<dbReference type="InterPro" id="IPR017441">
    <property type="entry name" value="Protein_kinase_ATP_BS"/>
</dbReference>
<dbReference type="InterPro" id="IPR008271">
    <property type="entry name" value="Ser/Thr_kinase_AS"/>
</dbReference>
<dbReference type="InterPro" id="IPR044109">
    <property type="entry name" value="STKc_PKA"/>
</dbReference>
<dbReference type="PANTHER" id="PTHR24353:SF153">
    <property type="entry name" value="CAMP-DEPENDENT PROTEIN KINASE CATALYTIC SUBUNIT 1"/>
    <property type="match status" value="1"/>
</dbReference>
<dbReference type="PANTHER" id="PTHR24353">
    <property type="entry name" value="CYCLIC NUCLEOTIDE-DEPENDENT PROTEIN KINASE"/>
    <property type="match status" value="1"/>
</dbReference>
<dbReference type="Pfam" id="PF00069">
    <property type="entry name" value="Pkinase"/>
    <property type="match status" value="1"/>
</dbReference>
<dbReference type="SMART" id="SM00220">
    <property type="entry name" value="S_TKc"/>
    <property type="match status" value="1"/>
</dbReference>
<dbReference type="SUPFAM" id="SSF56112">
    <property type="entry name" value="Protein kinase-like (PK-like)"/>
    <property type="match status" value="1"/>
</dbReference>
<dbReference type="PROSITE" id="PS00107">
    <property type="entry name" value="PROTEIN_KINASE_ATP"/>
    <property type="match status" value="1"/>
</dbReference>
<dbReference type="PROSITE" id="PS50011">
    <property type="entry name" value="PROTEIN_KINASE_DOM"/>
    <property type="match status" value="1"/>
</dbReference>
<dbReference type="PROSITE" id="PS00108">
    <property type="entry name" value="PROTEIN_KINASE_ST"/>
    <property type="match status" value="1"/>
</dbReference>
<protein>
    <recommendedName>
        <fullName>cAMP-dependent protein kinase catalytic subunit</fullName>
        <shortName>PKA C</shortName>
        <ecNumber evidence="11">2.7.11.11</ecNumber>
    </recommendedName>
</protein>
<gene>
    <name type="primary">kin-1</name>
    <name type="ORF">ZK909.2</name>
</gene>
<evidence type="ECO:0000250" key="1">
    <source>
        <dbReference type="UniProtKB" id="P51817"/>
    </source>
</evidence>
<evidence type="ECO:0000255" key="2"/>
<evidence type="ECO:0000255" key="3">
    <source>
        <dbReference type="PROSITE-ProRule" id="PRU00159"/>
    </source>
</evidence>
<evidence type="ECO:0000255" key="4">
    <source>
        <dbReference type="PROSITE-ProRule" id="PRU10027"/>
    </source>
</evidence>
<evidence type="ECO:0000269" key="5">
    <source>
    </source>
</evidence>
<evidence type="ECO:0000269" key="6">
    <source>
    </source>
</evidence>
<evidence type="ECO:0000269" key="7">
    <source>
    </source>
</evidence>
<evidence type="ECO:0000269" key="8">
    <source>
    </source>
</evidence>
<evidence type="ECO:0000269" key="9">
    <source>
    </source>
</evidence>
<evidence type="ECO:0000269" key="10">
    <source>
    </source>
</evidence>
<evidence type="ECO:0000269" key="11">
    <source>
    </source>
</evidence>
<evidence type="ECO:0000305" key="12"/>
<comment type="function">
    <text evidence="8 10">Essential for larval development (PubMed:22887816). Controls the rhythmic contraction of enteric muscles probably by regulating G-protein coupled receptor aex-2-mediated calcium influx in GABAergic DVB neurons (PubMed:24086161). Plays a role in the control of oocyte meiotic maturation by gonadal sheath cells (PubMed:22887816).</text>
</comment>
<comment type="function">
    <text evidence="6">Isoforms a and b: May play a role in the regulation of neuromuscular junctions.</text>
</comment>
<comment type="catalytic activity">
    <reaction evidence="11">
        <text>L-seryl-[protein] + ATP = O-phospho-L-seryl-[protein] + ADP + H(+)</text>
        <dbReference type="Rhea" id="RHEA:17989"/>
        <dbReference type="Rhea" id="RHEA-COMP:9863"/>
        <dbReference type="Rhea" id="RHEA-COMP:11604"/>
        <dbReference type="ChEBI" id="CHEBI:15378"/>
        <dbReference type="ChEBI" id="CHEBI:29999"/>
        <dbReference type="ChEBI" id="CHEBI:30616"/>
        <dbReference type="ChEBI" id="CHEBI:83421"/>
        <dbReference type="ChEBI" id="CHEBI:456216"/>
        <dbReference type="EC" id="2.7.11.11"/>
    </reaction>
</comment>
<comment type="catalytic activity">
    <reaction evidence="11">
        <text>L-threonyl-[protein] + ATP = O-phospho-L-threonyl-[protein] + ADP + H(+)</text>
        <dbReference type="Rhea" id="RHEA:46608"/>
        <dbReference type="Rhea" id="RHEA-COMP:11060"/>
        <dbReference type="Rhea" id="RHEA-COMP:11605"/>
        <dbReference type="ChEBI" id="CHEBI:15378"/>
        <dbReference type="ChEBI" id="CHEBI:30013"/>
        <dbReference type="ChEBI" id="CHEBI:30616"/>
        <dbReference type="ChEBI" id="CHEBI:61977"/>
        <dbReference type="ChEBI" id="CHEBI:456216"/>
        <dbReference type="EC" id="2.7.11.11"/>
    </reaction>
</comment>
<comment type="activity regulation">
    <text evidence="1">Binding of cAMP to kin-2 regulatory subunits induces dissociation of the heterotetramer. The released catalytic subunits are active and able to phosphorylate their substrates.</text>
</comment>
<comment type="subunit">
    <text evidence="1">Heterotetramer composed of two regulatory subunits and two catalytic subunits.</text>
</comment>
<comment type="alternative products">
    <event type="alternative splicing"/>
    <isoform>
        <id>P21137-1</id>
        <name>e</name>
        <sequence type="displayed"/>
    </isoform>
    <isoform>
        <id>P21137-2</id>
        <name>a</name>
        <name>Major</name>
        <sequence type="described" ref="VSP_004751 VSP_004758"/>
    </isoform>
    <isoform>
        <id>P21137-3</id>
        <name>b</name>
        <name>Minor</name>
        <sequence type="described" ref="VSP_004751"/>
    </isoform>
    <isoform>
        <id>P21137-4</id>
        <name>c</name>
        <sequence type="described" ref="VSP_004756 VSP_004757"/>
    </isoform>
    <isoform>
        <id>P21137-5</id>
        <name>d</name>
        <sequence type="described" ref="VSP_004750"/>
    </isoform>
    <isoform>
        <id>P21137-6</id>
        <name>f</name>
        <sequence type="described" ref="VSP_004752 VSP_004758"/>
    </isoform>
    <isoform>
        <id>P21137-7</id>
        <name>g</name>
        <sequence type="described" ref="VSP_004754 VSP_004758"/>
    </isoform>
    <isoform>
        <id>P21137-8</id>
        <name>h</name>
        <sequence type="described" ref="VSP_004753 VSP_004758"/>
    </isoform>
    <isoform>
        <id>P21137-9</id>
        <name>i</name>
        <sequence type="described" ref="VSP_004754"/>
    </isoform>
    <isoform>
        <id>P21137-10</id>
        <name>j</name>
        <sequence type="described" ref="VSP_004753"/>
    </isoform>
    <isoform>
        <id>P21137-11</id>
        <name>k</name>
        <sequence type="described" ref="VSP_004752"/>
    </isoform>
    <isoform>
        <id>P21137-12</id>
        <name>l</name>
        <sequence type="described" ref="VSP_004758"/>
    </isoform>
    <isoform>
        <id>P21137-13</id>
        <name>m</name>
        <sequence type="described" ref="VSP_004750 VSP_004758"/>
    </isoform>
    <text>Experimental confirmation may be lacking for some isoforms.</text>
</comment>
<comment type="developmental stage">
    <text evidence="5 9">Expressed at low levels in the embryo. Expression increases after hatching and during larval stages and, despite a decrease, remains high in adults (at protein level).</text>
</comment>
<comment type="PTM">
    <text evidence="7 11">Isoform h and isoform j are myristoylated.</text>
</comment>
<comment type="disruption phenotype">
    <text evidence="6">RNAi-mediated knockdown of isoforms a and b in neurons shows a temperature-sensitive adult onset paralysis of the distal part of the body resulting in the loss of backward movements and an inability to lay eggs. RNAi-mediated knockdown of isoforms f and k results in no obvious phenotype.</text>
</comment>
<comment type="similarity">
    <text evidence="12">Belongs to the protein kinase superfamily. AGC Ser/Thr protein kinase family. cAMP subfamily.</text>
</comment>
<name>KAPC1_CAEEL</name>
<organism>
    <name type="scientific">Caenorhabditis elegans</name>
    <dbReference type="NCBI Taxonomy" id="6239"/>
    <lineage>
        <taxon>Eukaryota</taxon>
        <taxon>Metazoa</taxon>
        <taxon>Ecdysozoa</taxon>
        <taxon>Nematoda</taxon>
        <taxon>Chromadorea</taxon>
        <taxon>Rhabditida</taxon>
        <taxon>Rhabditina</taxon>
        <taxon>Rhabditomorpha</taxon>
        <taxon>Rhabditoidea</taxon>
        <taxon>Rhabditidae</taxon>
        <taxon>Peloderinae</taxon>
        <taxon>Caenorhabditis</taxon>
    </lineage>
</organism>
<accession>P21137</accession>
<accession>O18310</accession>
<accession>O18311</accession>
<accession>Q9UB39</accession>
<accession>Q9XZP8</accession>
<accession>Q9XZP9</accession>
<accession>Q9XZQ0</accession>
<accession>Q9XZQ8</accession>
<accession>Q9XZQ9</accession>
<sequence>MPTRLDIVGNLQFSSSTDNGDEDQEADVTACFVLPSPSSFSKLSILDDPVEDFKEFLDKAREDFKQRWENPAQNTACLDDFDRIKTLGTGSFGRVMLVKHKQSGNYYAMKILDKQKVVKLKQVEHTLNEKRILQAIDFPFLVNMTFSFKDNSNLYMVLEFISGGEMFSHLRRIGRFSEPHSRFYAAQIVLAFEYLHSLDLIYRDLKPENLLIDSTGYLKITDFGFAKRVKGRTWTLCGTPEYLAPEIILSKGYNKAVDWWALGVLIYEMAAGYPPFFADQPIQIYEKIVSGKVKFPSHFSNELKDLLKNLLQVDLTKRYGNLKNGVADIKNHKWFGSTDWIAIYQKKITPPSFSKGESNGRLFEALYPRVDGPADTRHFVEEVQEPTEFVIAATPQLEELFVEF</sequence>
<keyword id="KW-0025">Alternative splicing</keyword>
<keyword id="KW-0067">ATP-binding</keyword>
<keyword id="KW-0114">cAMP</keyword>
<keyword id="KW-0418">Kinase</keyword>
<keyword id="KW-0449">Lipoprotein</keyword>
<keyword id="KW-0519">Myristate</keyword>
<keyword id="KW-0547">Nucleotide-binding</keyword>
<keyword id="KW-0597">Phosphoprotein</keyword>
<keyword id="KW-1185">Reference proteome</keyword>
<keyword id="KW-0723">Serine/threonine-protein kinase</keyword>
<keyword id="KW-0808">Transferase</keyword>
<proteinExistence type="evidence at protein level"/>
<reference key="1">
    <citation type="journal article" date="1990" name="J. Biol. Chem.">
        <title>Cloning, characterization, and expression of the gene for the catalytic subunit of cAMP-dependent protein kinase in Caenorhabditis elegans. Identification of highly conserved and unique isoforms generated by alternative splicing.</title>
        <authorList>
            <person name="Gross R.E."/>
            <person name="Bagchi S."/>
            <person name="Lu X."/>
            <person name="Rubin C.S."/>
        </authorList>
    </citation>
    <scope>NUCLEOTIDE SEQUENCE [GENOMIC DNA]</scope>
    <scope>ALTERNATIVE SPLICING (ISOFORMS A AND B)</scope>
    <scope>DEVELOPMENTAL STAGE</scope>
    <source>
        <strain>Bristol N2</strain>
    </source>
</reference>
<reference key="2">
    <citation type="journal article" date="1998" name="Science">
        <title>Genome sequence of the nematode C. elegans: a platform for investigating biology.</title>
        <authorList>
            <consortium name="The C. elegans sequencing consortium"/>
        </authorList>
    </citation>
    <scope>NUCLEOTIDE SEQUENCE [LARGE SCALE GENOMIC DNA]</scope>
    <scope>ALTERNATIVE SPLICING</scope>
    <source>
        <strain>Bristol N2</strain>
    </source>
</reference>
<reference key="3">
    <citation type="journal article" date="1999" name="Biochem. J.">
        <title>Organization and alternative splicing of the Caenorhabditis elegans cyclic AMP-dependent protein kinase (PK-A) catalytic subunit gene (kin-1).</title>
        <authorList>
            <person name="Tabish M."/>
            <person name="Clegg R.A."/>
            <person name="Rees H.H."/>
            <person name="Fisher M.J."/>
        </authorList>
    </citation>
    <scope>NUCLEOTIDE SEQUENCE [MRNA] OF 1-73</scope>
    <scope>ALTERNATIVE SPLICING</scope>
</reference>
<reference key="4">
    <citation type="journal article" date="1997" name="Biochem. Biophys. Res. Commun.">
        <title>N-Myristoylation of the catalytic subunit of cAMP-dependent protein kinase in the free-living nematode Caenorhabditis elegans.</title>
        <authorList>
            <person name="Aspbury R.A."/>
            <person name="Fisher M.J."/>
            <person name="Rees H.H."/>
            <person name="Clegg R.A."/>
        </authorList>
    </citation>
    <scope>CATALYTIC ACTIVITY</scope>
    <scope>MYRISTOYLATION</scope>
</reference>
<reference key="5">
    <citation type="journal article" date="2006" name="Cell. Signal.">
        <title>Expression of multiple isoforms of the cAMP-dependent protein kinase (PK-A) catalytic subunit in the nematode, Caenorhabditis elegans.</title>
        <authorList>
            <person name="Bowen L.C."/>
            <person name="Bicknell A.V."/>
            <person name="Tabish M."/>
            <person name="Clegg R.A."/>
            <person name="Rees H.H."/>
            <person name="Fisher M.J."/>
        </authorList>
    </citation>
    <scope>DEVELOPMENTAL STAGE</scope>
</reference>
<reference key="6">
    <citation type="journal article" date="2008" name="Gene">
        <title>siRNA-mediated knockdown of a splice variant of the PK-A catalytic subunit gene causes adult-onset paralysis in C. elegans.</title>
        <authorList>
            <person name="Murray P."/>
            <person name="Clegg R.A."/>
            <person name="Rees H.H."/>
            <person name="Fisher M.J."/>
        </authorList>
    </citation>
    <scope>FUNCTION</scope>
    <scope>DISRUPTION PHENOTYPE</scope>
    <scope>CHARACTERIZATION OF ISOFORMS A; B; F AND K</scope>
</reference>
<reference key="7">
    <citation type="journal article" date="2012" name="Arch. Biochem. Biophys.">
        <title>Characterisation of the N'1 isoform of the cyclic AMP-dependent protein kinase (PK-A) catalytic subunit in the nematode, Caenorhabditis elegans.</title>
        <authorList>
            <person name="Clegg R.A."/>
            <person name="Bowen L.C."/>
            <person name="Bicknell A.V."/>
            <person name="Tabish M."/>
            <person name="Prescott M.C."/>
            <person name="Rees H.H."/>
            <person name="Fisher M.J."/>
        </authorList>
    </citation>
    <scope>MYRISTOYLATION AT GLY-2 (ISOFORMS H AND J)</scope>
</reference>
<reference key="8">
    <citation type="journal article" date="2012" name="Genetics">
        <title>SACY-1 DEAD-Box helicase links the somatic control of oocyte meiotic maturation to the sperm-to-oocyte switch and gamete maintenance in Caenorhabditis elegans.</title>
        <authorList>
            <person name="Kim S."/>
            <person name="Govindan J.A."/>
            <person name="Tu Z.J."/>
            <person name="Greenstein D."/>
        </authorList>
    </citation>
    <scope>FUNCTION</scope>
</reference>
<reference key="9">
    <citation type="journal article" date="2013" name="PLoS Genet.">
        <title>PKA controls calcium influx into motor neurons during a rhythmic behavior.</title>
        <authorList>
            <person name="Wang H."/>
            <person name="Sieburth D."/>
        </authorList>
    </citation>
    <scope>FUNCTION</scope>
    <scope>ACTIVITY REGULATION</scope>
    <scope>MUTAGENESIS OF HIS-125 AND TRP-234</scope>
</reference>
<feature type="chain" id="PRO_0000086067" description="cAMP-dependent protein kinase catalytic subunit">
    <location>
        <begin position="1"/>
        <end position="404"/>
    </location>
</feature>
<feature type="domain" description="Protein kinase" evidence="3">
    <location>
        <begin position="81"/>
        <end position="335"/>
    </location>
</feature>
<feature type="active site" description="Proton acceptor" evidence="3 4">
    <location>
        <position position="204"/>
    </location>
</feature>
<feature type="binding site" evidence="3">
    <location>
        <begin position="87"/>
        <end position="95"/>
    </location>
    <ligand>
        <name>ATP</name>
        <dbReference type="ChEBI" id="CHEBI:30616"/>
    </ligand>
</feature>
<feature type="binding site" evidence="3">
    <location>
        <position position="110"/>
    </location>
    <ligand>
        <name>ATP</name>
        <dbReference type="ChEBI" id="CHEBI:30616"/>
    </ligand>
</feature>
<feature type="modified residue" description="Phosphothreonine" evidence="2">
    <location>
        <position position="233"/>
    </location>
</feature>
<feature type="modified residue" description="Phosphothreonine" evidence="2">
    <location>
        <position position="376"/>
    </location>
</feature>
<feature type="splice variant" id="VSP_004756" description="In isoform c." evidence="12">
    <original>MPTRLDIVGNLQFSSSTDNGDEDQEADVTACFVLPSPSSFSKLSILDDPVEDFKEFLDKAREDFKQRWENPA</original>
    <variation>MEEEEWRRRLSAAIRREDEGSLEEDEEDEGFILHPLCRTGPLQMTVKASNSTTTLTPSSTTTTSPSMPSSPSDSPSDDFSDDTNTSGVFPLTTALSFPVAPLSPRNTTSSITTGLVKKRRSSSSPEDICREKIPHILLKTSSGVVVPLASRGQRAPAITLQNPPPSAAIRTVPPPSFSTFSVRSLPFKTPNCGSKDDTDAENMEGLDDDYLRQPTTSTSAPVSPIDHRQVRRGGRGVVVESQVPNFTAEIFWLKTQLSDHWSMKWLF</variation>
    <location>
        <begin position="1"/>
        <end position="72"/>
    </location>
</feature>
<feature type="splice variant" id="VSP_004751" description="In isoform a and isoform b." evidence="12">
    <original>MPTRLDIVGNLQFSSSTDNGDEDQEADVTACFVLPSPSSFSKLSILDDPVEDF</original>
    <variation>MLKFLKPKSSDEGSSKDNKNSASL</variation>
    <location>
        <begin position="1"/>
        <end position="53"/>
    </location>
</feature>
<feature type="splice variant" id="VSP_004752" description="In isoform f and isoform k." evidence="12">
    <original>MPTRLDIVGNLQFSSSTDNGDEDQEADVTACFVLPSPSSFSKLSILDDPVEDF</original>
    <variation>MLSSSFFRGSMKERKNEALKNHKSKYISGGYLETV</variation>
    <location>
        <begin position="1"/>
        <end position="53"/>
    </location>
</feature>
<feature type="splice variant" id="VSP_004754" description="In isoform g and isoform i." evidence="12">
    <original>MPTRLDIVGNLQFSSSTDNGDEDQEADVTACFVLPSPSSFSKLSILDDPVEDF</original>
    <variation>MGSMVFIV</variation>
    <location>
        <begin position="1"/>
        <end position="53"/>
    </location>
</feature>
<feature type="splice variant" id="VSP_004753" description="In isoform h and isoform j." evidence="12">
    <original>MPTRLDIVGNLQFSSSTDNGDEDQEADVTACFVLPSPSSFSKLSILDDPVEDF</original>
    <variation>MGNAASGGSSGGGGSARRGNGGGNNGSDYNNAMVFSNGRLAAAETI</variation>
    <location>
        <begin position="1"/>
        <end position="53"/>
    </location>
</feature>
<feature type="splice variant" id="VSP_004750" description="In isoform d and isoform m." evidence="12">
    <original>MPTRLDIVGNLQFSSSTDNGDEDQEADVTACFVLPSPSSFSKLSILDDPVED</original>
    <variation>MSSSSNKKVQVKF</variation>
    <location>
        <begin position="1"/>
        <end position="52"/>
    </location>
</feature>
<feature type="splice variant" id="VSP_004757" description="In isoform c." evidence="12">
    <original>ITPPSFSKGESNGRLFEALYPRVDGPADTRHFVEEVQEPTEFVIAATPQLEELFVEF</original>
    <variation>VSSYPI</variation>
    <location>
        <begin position="348"/>
        <end position="404"/>
    </location>
</feature>
<feature type="splice variant" id="VSP_004758" description="In isoform a, isoform f, isoform g, isoform h, isoform l and isoform m." evidence="12">
    <original>TPPSFSKGESNGRLFEALYPRVDGPADTRHFVEEVQEPTEFVIAATPQLEELFVEF</original>
    <variation>EAPFLPKCRGPGDASNFDDYEEEPLRISGTEKCAKEFAEF</variation>
    <location>
        <begin position="349"/>
        <end position="404"/>
    </location>
</feature>
<feature type="mutagenesis site" description="Loss of interaction with kin-2 resulting in constitutive activation; when associated with R-234 (in isoform a)." evidence="10">
    <original>H</original>
    <variation>Q</variation>
    <location>
        <position position="125"/>
    </location>
</feature>
<feature type="mutagenesis site" description="Loss of interaction with kin-2 resulting in constitutive activation; when associated with Q-125 (in isoform a)." evidence="10">
    <original>W</original>
    <variation>R</variation>
    <location>
        <position position="234"/>
    </location>
</feature>
<feature type="sequence conflict" description="In Ref. 1; AAA51610." evidence="12" ref="1">
    <original>F</original>
    <variation>L</variation>
    <location>
        <position position="148"/>
    </location>
</feature>
<feature type="sequence conflict" description="In Ref. 1; AAA51610." evidence="12" ref="1">
    <original>I</original>
    <variation>V</variation>
    <location>
        <position position="220"/>
    </location>
</feature>
<feature type="initiator methionine" description="Removed" evidence="12">
    <location sequence="P21137-8">
        <position position="1"/>
    </location>
</feature>
<feature type="lipid moiety-binding region" description="N-myristoyl glycine" evidence="7">
    <location sequence="P21137-8">
        <position position="2"/>
    </location>
</feature>
<feature type="initiator methionine" description="Removed" evidence="12">
    <location sequence="P21137-10">
        <position position="1"/>
    </location>
</feature>
<feature type="lipid moiety-binding region" description="N-myristoyl glycine" evidence="7">
    <location sequence="P21137-10">
        <position position="2"/>
    </location>
</feature>